<protein>
    <recommendedName>
        <fullName evidence="1">Chromatin protein Cren7</fullName>
    </recommendedName>
</protein>
<comment type="function">
    <text evidence="1">A chromatin protein, binds double-stranded DNA without sequence specificity. Constrains negative DNA supercoils.</text>
</comment>
<comment type="subunit">
    <text evidence="1">Monomer.</text>
</comment>
<comment type="subcellular location">
    <subcellularLocation>
        <location evidence="1">Chromosome</location>
    </subcellularLocation>
    <subcellularLocation>
        <location evidence="1">Cytoplasm</location>
    </subcellularLocation>
</comment>
<comment type="PTM">
    <text evidence="1">Methylated at multiple sites, to varying extents.</text>
</comment>
<comment type="similarity">
    <text evidence="1">Belongs to the Cren7 family.</text>
</comment>
<evidence type="ECO:0000255" key="1">
    <source>
        <dbReference type="HAMAP-Rule" id="MF_01387"/>
    </source>
</evidence>
<sequence>MSSGKKAVKVKTPAGKEAELVPEKVWALAPKGRKGVKIGLFKDPETGKYFRHKLPDDYPI</sequence>
<name>CREN7_SACI4</name>
<dbReference type="EMBL" id="CP001400">
    <property type="protein sequence ID" value="ACP38003.1"/>
    <property type="molecule type" value="Genomic_DNA"/>
</dbReference>
<dbReference type="RefSeq" id="WP_012711256.1">
    <property type="nucleotide sequence ID" value="NC_012588.1"/>
</dbReference>
<dbReference type="BMRB" id="C3MYM4"/>
<dbReference type="SMR" id="C3MYM4"/>
<dbReference type="GeneID" id="84061563"/>
<dbReference type="KEGG" id="sia:M1425_1248"/>
<dbReference type="HOGENOM" id="CLU_2911298_0_0_2"/>
<dbReference type="Proteomes" id="UP000001350">
    <property type="component" value="Chromosome"/>
</dbReference>
<dbReference type="GO" id="GO:0005694">
    <property type="term" value="C:chromosome"/>
    <property type="evidence" value="ECO:0007669"/>
    <property type="project" value="UniProtKB-SubCell"/>
</dbReference>
<dbReference type="GO" id="GO:0005737">
    <property type="term" value="C:cytoplasm"/>
    <property type="evidence" value="ECO:0007669"/>
    <property type="project" value="UniProtKB-SubCell"/>
</dbReference>
<dbReference type="GO" id="GO:0003690">
    <property type="term" value="F:double-stranded DNA binding"/>
    <property type="evidence" value="ECO:0007669"/>
    <property type="project" value="UniProtKB-UniRule"/>
</dbReference>
<dbReference type="Gene3D" id="2.30.30.610">
    <property type="entry name" value="Chromatin protein Cren7"/>
    <property type="match status" value="1"/>
</dbReference>
<dbReference type="HAMAP" id="MF_01387">
    <property type="entry name" value="Chromatin_Cren7"/>
    <property type="match status" value="1"/>
</dbReference>
<dbReference type="InterPro" id="IPR038647">
    <property type="entry name" value="Cren7_sf"/>
</dbReference>
<dbReference type="InterPro" id="IPR020906">
    <property type="entry name" value="dsDNA-bd_Cren7"/>
</dbReference>
<dbReference type="Pfam" id="PF11520">
    <property type="entry name" value="Cren7"/>
    <property type="match status" value="1"/>
</dbReference>
<feature type="chain" id="PRO_1000215133" description="Chromatin protein Cren7">
    <location>
        <begin position="1"/>
        <end position="60"/>
    </location>
</feature>
<keyword id="KW-0158">Chromosome</keyword>
<keyword id="KW-0963">Cytoplasm</keyword>
<keyword id="KW-0238">DNA-binding</keyword>
<keyword id="KW-0488">Methylation</keyword>
<proteinExistence type="inferred from homology"/>
<reference key="1">
    <citation type="journal article" date="2009" name="Proc. Natl. Acad. Sci. U.S.A.">
        <title>Biogeography of the Sulfolobus islandicus pan-genome.</title>
        <authorList>
            <person name="Reno M.L."/>
            <person name="Held N.L."/>
            <person name="Fields C.J."/>
            <person name="Burke P.V."/>
            <person name="Whitaker R.J."/>
        </authorList>
    </citation>
    <scope>NUCLEOTIDE SEQUENCE [LARGE SCALE GENOMIC DNA]</scope>
    <source>
        <strain>M.14.25 / Kamchatka #1</strain>
    </source>
</reference>
<gene>
    <name evidence="1" type="primary">creN7</name>
    <name type="ordered locus">M1425_1248</name>
</gene>
<accession>C3MYM4</accession>
<organism>
    <name type="scientific">Saccharolobus islandicus (strain M.14.25 / Kamchatka #1)</name>
    <name type="common">Sulfolobus islandicus</name>
    <dbReference type="NCBI Taxonomy" id="427317"/>
    <lineage>
        <taxon>Archaea</taxon>
        <taxon>Thermoproteota</taxon>
        <taxon>Thermoprotei</taxon>
        <taxon>Sulfolobales</taxon>
        <taxon>Sulfolobaceae</taxon>
        <taxon>Saccharolobus</taxon>
    </lineage>
</organism>